<sequence length="588" mass="63775">MSTETELQVAVKTSAKKDSRKKGQDRSEATLIKRFKGEGVRYKAKLIGIDEVSAARGDKLCQDSMMKLKGVVAGARSKGEHKQKIFLTISFGGIKIFDEKTGALQHHHAVHEISYIAKDITDHRAFGYVCGKEGNHRFVAIKTAQAAEPVILDLRDLFQLIYELKQREELEKKAQKDKQCEQAVYQTILEEDVEDPVYQYIVFEAGHEPIRDPETEENIYQVPTSQKKEGVYDVPKSQPVSNGYSFEDFEERFAAATPNRNLPTDFDEIFEATKAVTQLELFGDMSTPPDITSPPTPATPGDAFIPSSSQTLPASADVFSSVPFGTAAVPSGYVAMGAVLPSFWGQQPLVQQQMVMGAQPPVAQVMPGAQPIAWGQPGLFPATQQPWPTVAGQFPPAAFMPTQTVMPLPAAMFQGPLTPLATVPGTSDSTRSSPQTDKPRQKMGKETFKDFQMAQPPPVPSRKPDQPSLTCTSEAFSSYFNKVGVAQDTDDCDDFDISQLNLTPVTSTTPSTNSPPTPAPRQSSPSKSSASHASDPTTDDIFEEGFESPSKSEEQEAPDGSQASSNSDPFGEPSGEPSGDNISPQAGS</sequence>
<evidence type="ECO:0000250" key="1">
    <source>
        <dbReference type="UniProtKB" id="P97318"/>
    </source>
</evidence>
<evidence type="ECO:0000250" key="2">
    <source>
        <dbReference type="UniProtKB" id="Q8CJH2"/>
    </source>
</evidence>
<evidence type="ECO:0000255" key="3">
    <source>
        <dbReference type="PROSITE-ProRule" id="PRU00148"/>
    </source>
</evidence>
<evidence type="ECO:0000256" key="4">
    <source>
        <dbReference type="SAM" id="MobiDB-lite"/>
    </source>
</evidence>
<evidence type="ECO:0000269" key="5">
    <source>
    </source>
</evidence>
<evidence type="ECO:0000269" key="6">
    <source>
    </source>
</evidence>
<evidence type="ECO:0000269" key="7">
    <source>
    </source>
</evidence>
<evidence type="ECO:0000303" key="8">
    <source>
    </source>
</evidence>
<evidence type="ECO:0000303" key="9">
    <source>
    </source>
</evidence>
<evidence type="ECO:0000303" key="10">
    <source>
    </source>
</evidence>
<evidence type="ECO:0000303" key="11">
    <source ref="2"/>
</evidence>
<evidence type="ECO:0000305" key="12"/>
<protein>
    <recommendedName>
        <fullName>Disabled homolog 1</fullName>
    </recommendedName>
</protein>
<proteinExistence type="evidence at protein level"/>
<dbReference type="EMBL" id="AF071062">
    <property type="protein sequence ID" value="AAC70068.1"/>
    <property type="molecule type" value="mRNA"/>
</dbReference>
<dbReference type="EMBL" id="AF263547">
    <property type="protein sequence ID" value="AAF73058.1"/>
    <property type="molecule type" value="mRNA"/>
</dbReference>
<dbReference type="EMBL" id="AL139219">
    <property type="status" value="NOT_ANNOTATED_CDS"/>
    <property type="molecule type" value="Genomic_DNA"/>
</dbReference>
<dbReference type="EMBL" id="AL161740">
    <property type="status" value="NOT_ANNOTATED_CDS"/>
    <property type="molecule type" value="Genomic_DNA"/>
</dbReference>
<dbReference type="EMBL" id="AL354883">
    <property type="status" value="NOT_ANNOTATED_CDS"/>
    <property type="molecule type" value="Genomic_DNA"/>
</dbReference>
<dbReference type="EMBL" id="AK095513">
    <property type="protein sequence ID" value="BAG53075.1"/>
    <property type="molecule type" value="mRNA"/>
</dbReference>
<dbReference type="EMBL" id="AB210012">
    <property type="protein sequence ID" value="BAE06094.1"/>
    <property type="status" value="ALT_INIT"/>
    <property type="molecule type" value="mRNA"/>
</dbReference>
<dbReference type="EMBL" id="CH471059">
    <property type="protein sequence ID" value="EAX06637.1"/>
    <property type="molecule type" value="Genomic_DNA"/>
</dbReference>
<dbReference type="EMBL" id="BC067445">
    <property type="protein sequence ID" value="AAH67445.1"/>
    <property type="molecule type" value="mRNA"/>
</dbReference>
<dbReference type="EMBL" id="BC067446">
    <property type="protein sequence ID" value="AAH67446.1"/>
    <property type="molecule type" value="mRNA"/>
</dbReference>
<dbReference type="EMBL" id="BC067447">
    <property type="protein sequence ID" value="AAH67447.1"/>
    <property type="molecule type" value="mRNA"/>
</dbReference>
<dbReference type="EMBL" id="BC112938">
    <property type="protein sequence ID" value="AAI12939.1"/>
    <property type="molecule type" value="mRNA"/>
</dbReference>
<dbReference type="CCDS" id="CCDS607.1">
    <molecule id="O75553-6"/>
</dbReference>
<dbReference type="RefSeq" id="NP_001340912.1">
    <molecule id="O75553-6"/>
    <property type="nucleotide sequence ID" value="NM_001353983.2"/>
</dbReference>
<dbReference type="RefSeq" id="NP_001340914.1">
    <molecule id="O75553-6"/>
    <property type="nucleotide sequence ID" value="NM_001353985.2"/>
</dbReference>
<dbReference type="RefSeq" id="NP_001352721.1">
    <molecule id="O75553-6"/>
    <property type="nucleotide sequence ID" value="NM_001365792.1"/>
</dbReference>
<dbReference type="RefSeq" id="NP_001352722.1">
    <molecule id="O75553-6"/>
    <property type="nucleotide sequence ID" value="NM_001365793.1"/>
</dbReference>
<dbReference type="RefSeq" id="NP_001366391.1">
    <molecule id="O75553-6"/>
    <property type="nucleotide sequence ID" value="NM_001379462.1"/>
</dbReference>
<dbReference type="RefSeq" id="NP_066566.3">
    <molecule id="O75553-6"/>
    <property type="nucleotide sequence ID" value="NM_021080.3"/>
</dbReference>
<dbReference type="SMR" id="O75553"/>
<dbReference type="BioGRID" id="107970">
    <property type="interactions" value="85"/>
</dbReference>
<dbReference type="ELM" id="O75553"/>
<dbReference type="FunCoup" id="O75553">
    <property type="interactions" value="1124"/>
</dbReference>
<dbReference type="IntAct" id="O75553">
    <property type="interactions" value="57"/>
</dbReference>
<dbReference type="MINT" id="O75553"/>
<dbReference type="STRING" id="9606.ENSP00000360280"/>
<dbReference type="GlyGen" id="O75553">
    <property type="glycosylation" value="5 sites, 1 O-linked glycan (1 site)"/>
</dbReference>
<dbReference type="iPTMnet" id="O75553"/>
<dbReference type="PhosphoSitePlus" id="O75553"/>
<dbReference type="BioMuta" id="DAB1"/>
<dbReference type="jPOST" id="O75553"/>
<dbReference type="MassIVE" id="O75553"/>
<dbReference type="PaxDb" id="9606-ENSP00000360280"/>
<dbReference type="PeptideAtlas" id="O75553"/>
<dbReference type="ProteomicsDB" id="50077">
    <molecule id="O75553-1"/>
</dbReference>
<dbReference type="ProteomicsDB" id="50078">
    <molecule id="O75553-2"/>
</dbReference>
<dbReference type="ProteomicsDB" id="50079">
    <molecule id="O75553-3"/>
</dbReference>
<dbReference type="ProteomicsDB" id="50080">
    <molecule id="O75553-4"/>
</dbReference>
<dbReference type="ProteomicsDB" id="50081">
    <molecule id="O75553-5"/>
</dbReference>
<dbReference type="ProteomicsDB" id="50082">
    <molecule id="O75553-6"/>
</dbReference>
<dbReference type="Pumba" id="O75553"/>
<dbReference type="Antibodypedia" id="19377">
    <property type="antibodies" value="500 antibodies from 35 providers"/>
</dbReference>
<dbReference type="DNASU" id="1600"/>
<dbReference type="Ensembl" id="ENST00000371230.1">
    <molecule id="O75553-2"/>
    <property type="protein sequence ID" value="ENSP00000360274.1"/>
    <property type="gene ID" value="ENSG00000173406.16"/>
</dbReference>
<dbReference type="Ensembl" id="ENST00000371231.5">
    <molecule id="O75553-1"/>
    <property type="protein sequence ID" value="ENSP00000360275.1"/>
    <property type="gene ID" value="ENSG00000173406.16"/>
</dbReference>
<dbReference type="Ensembl" id="ENST00000371236.7">
    <molecule id="O75553-6"/>
    <property type="protein sequence ID" value="ENSP00000360280.1"/>
    <property type="gene ID" value="ENSG00000173406.16"/>
</dbReference>
<dbReference type="Ensembl" id="ENST00000414851.6">
    <molecule id="O75553-6"/>
    <property type="protein sequence ID" value="ENSP00000387581.3"/>
    <property type="gene ID" value="ENSG00000173406.16"/>
</dbReference>
<dbReference type="Ensembl" id="ENST00000420954.6">
    <molecule id="O75553-5"/>
    <property type="protein sequence ID" value="ENSP00000395296.2"/>
    <property type="gene ID" value="ENSG00000173406.16"/>
</dbReference>
<dbReference type="GeneID" id="1600"/>
<dbReference type="KEGG" id="hsa:1600"/>
<dbReference type="MANE-Select" id="ENST00000371236.7">
    <molecule id="O75553-6"/>
    <property type="protein sequence ID" value="ENSP00000360280.1"/>
    <property type="RefSeq nucleotide sequence ID" value="NM_001365792.1"/>
    <property type="RefSeq protein sequence ID" value="NP_001352721.1"/>
</dbReference>
<dbReference type="UCSC" id="uc001cyq.2">
    <molecule id="O75553-1"/>
    <property type="organism name" value="human"/>
</dbReference>
<dbReference type="AGR" id="HGNC:2661"/>
<dbReference type="CTD" id="1600"/>
<dbReference type="DisGeNET" id="1600"/>
<dbReference type="GeneCards" id="DAB1"/>
<dbReference type="GeneReviews" id="DAB1"/>
<dbReference type="HGNC" id="HGNC:2661">
    <property type="gene designation" value="DAB1"/>
</dbReference>
<dbReference type="HPA" id="ENSG00000173406">
    <property type="expression patterns" value="Tissue enhanced (brain, intestine, seminal vesicle)"/>
</dbReference>
<dbReference type="MalaCards" id="DAB1"/>
<dbReference type="MIM" id="603448">
    <property type="type" value="gene"/>
</dbReference>
<dbReference type="MIM" id="615945">
    <property type="type" value="phenotype"/>
</dbReference>
<dbReference type="neXtProt" id="NX_O75553"/>
<dbReference type="OpenTargets" id="ENSG00000173406"/>
<dbReference type="Orphanet" id="363710">
    <property type="disease" value="Spinocerebellar ataxia type 37"/>
</dbReference>
<dbReference type="PharmGKB" id="PA27131"/>
<dbReference type="VEuPathDB" id="HostDB:ENSG00000173406"/>
<dbReference type="eggNOG" id="KOG3535">
    <property type="taxonomic scope" value="Eukaryota"/>
</dbReference>
<dbReference type="GeneTree" id="ENSGT00940000158038"/>
<dbReference type="HOGENOM" id="CLU_020747_2_0_1"/>
<dbReference type="InParanoid" id="O75553"/>
<dbReference type="OMA" id="FDEKTGX"/>
<dbReference type="OrthoDB" id="10069833at2759"/>
<dbReference type="PAN-GO" id="O75553">
    <property type="GO annotations" value="3 GO annotations based on evolutionary models"/>
</dbReference>
<dbReference type="PhylomeDB" id="O75553"/>
<dbReference type="TreeFam" id="TF316724"/>
<dbReference type="PathwayCommons" id="O75553"/>
<dbReference type="Reactome" id="R-HSA-8866376">
    <property type="pathway name" value="Reelin signalling pathway"/>
</dbReference>
<dbReference type="SignaLink" id="O75553"/>
<dbReference type="SIGNOR" id="O75553"/>
<dbReference type="BioGRID-ORCS" id="1600">
    <property type="hits" value="7 hits in 1138 CRISPR screens"/>
</dbReference>
<dbReference type="ChiTaRS" id="DAB1">
    <property type="organism name" value="human"/>
</dbReference>
<dbReference type="GeneWiki" id="DAB1"/>
<dbReference type="GenomeRNAi" id="1600"/>
<dbReference type="Pharos" id="O75553">
    <property type="development level" value="Tbio"/>
</dbReference>
<dbReference type="PRO" id="PR:O75553"/>
<dbReference type="Proteomes" id="UP000005640">
    <property type="component" value="Chromosome 1"/>
</dbReference>
<dbReference type="RNAct" id="O75553">
    <property type="molecule type" value="protein"/>
</dbReference>
<dbReference type="Bgee" id="ENSG00000173406">
    <property type="expression patterns" value="Expressed in cortical plate and 129 other cell types or tissues"/>
</dbReference>
<dbReference type="ExpressionAtlas" id="O75553">
    <property type="expression patterns" value="baseline and differential"/>
</dbReference>
<dbReference type="GO" id="GO:0005737">
    <property type="term" value="C:cytoplasm"/>
    <property type="evidence" value="ECO:0000250"/>
    <property type="project" value="UniProtKB"/>
</dbReference>
<dbReference type="GO" id="GO:0005829">
    <property type="term" value="C:cytosol"/>
    <property type="evidence" value="ECO:0000304"/>
    <property type="project" value="Reactome"/>
</dbReference>
<dbReference type="GO" id="GO:0098978">
    <property type="term" value="C:glutamatergic synapse"/>
    <property type="evidence" value="ECO:0007669"/>
    <property type="project" value="Ensembl"/>
</dbReference>
<dbReference type="GO" id="GO:0043231">
    <property type="term" value="C:intracellular membrane-bounded organelle"/>
    <property type="evidence" value="ECO:0000314"/>
    <property type="project" value="HPA"/>
</dbReference>
<dbReference type="GO" id="GO:0048471">
    <property type="term" value="C:perinuclear region of cytoplasm"/>
    <property type="evidence" value="ECO:0007669"/>
    <property type="project" value="Ensembl"/>
</dbReference>
<dbReference type="GO" id="GO:0035591">
    <property type="term" value="F:signaling adaptor activity"/>
    <property type="evidence" value="ECO:0000250"/>
    <property type="project" value="UniProtKB"/>
</dbReference>
<dbReference type="GO" id="GO:0007628">
    <property type="term" value="P:adult walking behavior"/>
    <property type="evidence" value="ECO:0007669"/>
    <property type="project" value="Ensembl"/>
</dbReference>
<dbReference type="GO" id="GO:0048708">
    <property type="term" value="P:astrocyte differentiation"/>
    <property type="evidence" value="ECO:0007669"/>
    <property type="project" value="Ensembl"/>
</dbReference>
<dbReference type="GO" id="GO:0007409">
    <property type="term" value="P:axonogenesis"/>
    <property type="evidence" value="ECO:0007669"/>
    <property type="project" value="Ensembl"/>
</dbReference>
<dbReference type="GO" id="GO:0007259">
    <property type="term" value="P:cell surface receptor signaling pathway via JAK-STAT"/>
    <property type="evidence" value="ECO:0007669"/>
    <property type="project" value="Ensembl"/>
</dbReference>
<dbReference type="GO" id="GO:0021813">
    <property type="term" value="P:cell-cell adhesion involved in neuronal-glial interactions involved in cerebral cortex radial glia guided migration"/>
    <property type="evidence" value="ECO:0007669"/>
    <property type="project" value="Ensembl"/>
</dbReference>
<dbReference type="GO" id="GO:0021953">
    <property type="term" value="P:central nervous system neuron differentiation"/>
    <property type="evidence" value="ECO:0007669"/>
    <property type="project" value="Ensembl"/>
</dbReference>
<dbReference type="GO" id="GO:0021589">
    <property type="term" value="P:cerebellum structural organization"/>
    <property type="evidence" value="ECO:0007669"/>
    <property type="project" value="Ensembl"/>
</dbReference>
<dbReference type="GO" id="GO:0016358">
    <property type="term" value="P:dendrite development"/>
    <property type="evidence" value="ECO:0007669"/>
    <property type="project" value="Ensembl"/>
</dbReference>
<dbReference type="GO" id="GO:0051645">
    <property type="term" value="P:Golgi localization"/>
    <property type="evidence" value="ECO:0007669"/>
    <property type="project" value="Ensembl"/>
</dbReference>
<dbReference type="GO" id="GO:0021766">
    <property type="term" value="P:hippocampus development"/>
    <property type="evidence" value="ECO:0007669"/>
    <property type="project" value="Ensembl"/>
</dbReference>
<dbReference type="GO" id="GO:0097477">
    <property type="term" value="P:lateral motor column neuron migration"/>
    <property type="evidence" value="ECO:0007669"/>
    <property type="project" value="Ensembl"/>
</dbReference>
<dbReference type="GO" id="GO:0021819">
    <property type="term" value="P:layer formation in cerebral cortex"/>
    <property type="evidence" value="ECO:0000250"/>
    <property type="project" value="UniProt"/>
</dbReference>
<dbReference type="GO" id="GO:0048712">
    <property type="term" value="P:negative regulation of astrocyte differentiation"/>
    <property type="evidence" value="ECO:0007669"/>
    <property type="project" value="Ensembl"/>
</dbReference>
<dbReference type="GO" id="GO:0050771">
    <property type="term" value="P:negative regulation of axonogenesis"/>
    <property type="evidence" value="ECO:0007669"/>
    <property type="project" value="Ensembl"/>
</dbReference>
<dbReference type="GO" id="GO:0007162">
    <property type="term" value="P:negative regulation of cell adhesion"/>
    <property type="evidence" value="ECO:0007669"/>
    <property type="project" value="Ensembl"/>
</dbReference>
<dbReference type="GO" id="GO:0046426">
    <property type="term" value="P:negative regulation of receptor signaling pathway via JAK-STAT"/>
    <property type="evidence" value="ECO:0007669"/>
    <property type="project" value="Ensembl"/>
</dbReference>
<dbReference type="GO" id="GO:0001764">
    <property type="term" value="P:neuron migration"/>
    <property type="evidence" value="ECO:0000318"/>
    <property type="project" value="GO_Central"/>
</dbReference>
<dbReference type="GO" id="GO:0045666">
    <property type="term" value="P:positive regulation of neuron differentiation"/>
    <property type="evidence" value="ECO:0007669"/>
    <property type="project" value="Ensembl"/>
</dbReference>
<dbReference type="GO" id="GO:0021942">
    <property type="term" value="P:radial glia guided migration of Purkinje cell"/>
    <property type="evidence" value="ECO:0007669"/>
    <property type="project" value="Ensembl"/>
</dbReference>
<dbReference type="GO" id="GO:0140650">
    <property type="term" value="P:radial glia-guided pyramidal neuron migration"/>
    <property type="evidence" value="ECO:0007669"/>
    <property type="project" value="Ensembl"/>
</dbReference>
<dbReference type="GO" id="GO:0038026">
    <property type="term" value="P:reelin-mediated signaling pathway"/>
    <property type="evidence" value="ECO:0000250"/>
    <property type="project" value="UniProt"/>
</dbReference>
<dbReference type="GO" id="GO:0090128">
    <property type="term" value="P:regulation of synapse maturation"/>
    <property type="evidence" value="ECO:0007669"/>
    <property type="project" value="Ensembl"/>
</dbReference>
<dbReference type="GO" id="GO:0007264">
    <property type="term" value="P:small GTPase-mediated signal transduction"/>
    <property type="evidence" value="ECO:0007669"/>
    <property type="project" value="Ensembl"/>
</dbReference>
<dbReference type="GO" id="GO:0021517">
    <property type="term" value="P:ventral spinal cord development"/>
    <property type="evidence" value="ECO:0007669"/>
    <property type="project" value="Ensembl"/>
</dbReference>
<dbReference type="CDD" id="cd01215">
    <property type="entry name" value="PTB_Dab"/>
    <property type="match status" value="1"/>
</dbReference>
<dbReference type="FunFam" id="2.30.29.30:FF:000035">
    <property type="entry name" value="Disabled homolog 2 isoform 1"/>
    <property type="match status" value="1"/>
</dbReference>
<dbReference type="Gene3D" id="2.30.29.30">
    <property type="entry name" value="Pleckstrin-homology domain (PH domain)/Phosphotyrosine-binding domain (PTB)"/>
    <property type="match status" value="1"/>
</dbReference>
<dbReference type="InterPro" id="IPR048559">
    <property type="entry name" value="DAB1/2_SBM"/>
</dbReference>
<dbReference type="InterPro" id="IPR048561">
    <property type="entry name" value="Dab_PTB"/>
</dbReference>
<dbReference type="InterPro" id="IPR011993">
    <property type="entry name" value="PH-like_dom_sf"/>
</dbReference>
<dbReference type="InterPro" id="IPR006020">
    <property type="entry name" value="PTB/PI_dom"/>
</dbReference>
<dbReference type="PANTHER" id="PTHR47695:SF4">
    <property type="entry name" value="DISABLED HOMOLOG 1"/>
    <property type="match status" value="1"/>
</dbReference>
<dbReference type="PANTHER" id="PTHR47695">
    <property type="entry name" value="PID DOMAIN-CONTAINING PROTEIN"/>
    <property type="match status" value="1"/>
</dbReference>
<dbReference type="Pfam" id="PF21792">
    <property type="entry name" value="DAB2_SBM"/>
    <property type="match status" value="1"/>
</dbReference>
<dbReference type="Pfam" id="PF00640">
    <property type="entry name" value="PID"/>
    <property type="match status" value="1"/>
</dbReference>
<dbReference type="SMART" id="SM00462">
    <property type="entry name" value="PTB"/>
    <property type="match status" value="1"/>
</dbReference>
<dbReference type="SUPFAM" id="SSF50729">
    <property type="entry name" value="PH domain-like"/>
    <property type="match status" value="1"/>
</dbReference>
<dbReference type="PROSITE" id="PS01179">
    <property type="entry name" value="PID"/>
    <property type="match status" value="1"/>
</dbReference>
<organism>
    <name type="scientific">Homo sapiens</name>
    <name type="common">Human</name>
    <dbReference type="NCBI Taxonomy" id="9606"/>
    <lineage>
        <taxon>Eukaryota</taxon>
        <taxon>Metazoa</taxon>
        <taxon>Chordata</taxon>
        <taxon>Craniata</taxon>
        <taxon>Vertebrata</taxon>
        <taxon>Euteleostomi</taxon>
        <taxon>Mammalia</taxon>
        <taxon>Eutheria</taxon>
        <taxon>Euarchontoglires</taxon>
        <taxon>Primates</taxon>
        <taxon>Haplorrhini</taxon>
        <taxon>Catarrhini</taxon>
        <taxon>Hominidae</taxon>
        <taxon>Homo</taxon>
    </lineage>
</organism>
<comment type="function">
    <text evidence="1">Signaling adapter of the reelin-mediated signaling pathway, which regulates the migration and differentiation of postmitotic neurons during brain development. Mediates intracellular transduction of Reelin signaling following reelin (RELN)-binding to its receptor: acts by docking proteins through its phosphotyrosine residues and PID domain.</text>
</comment>
<comment type="subunit">
    <text evidence="1 2 5 7">Associates with the SH2 domains of SRC, FYN and ABL (By similarity). Interacts (phosphorylated on tyrosine residues) with CRK and CRKL (via respective SH2 domain) (By similarity). Interacts with SIAH1, LRP8 and VLDLR (By similarity). Interacts with LRP1 (PubMed:15272003). Interacts with APLP1 (via NPXY motif) (By similarity). Interacts with DAB2IP (By similarity). Interacts with ZSWIM8 (PubMed:35989311).</text>
</comment>
<comment type="interaction">
    <interactant intactId="EBI-7875264">
        <id>O75553</id>
    </interactant>
    <interactant intactId="EBI-711810">
        <id>O14503</id>
        <label>BHLHE40</label>
    </interactant>
    <organismsDiffer>false</organismsDiffer>
    <experiments>3</experiments>
</comment>
<comment type="interaction">
    <interactant intactId="EBI-7875264">
        <id>O75553</id>
    </interactant>
    <interactant intactId="EBI-946029">
        <id>Q6P1W5</id>
        <label>C1orf94</label>
    </interactant>
    <organismsDiffer>false</organismsDiffer>
    <experiments>3</experiments>
</comment>
<comment type="interaction">
    <interactant intactId="EBI-7875264">
        <id>O75553</id>
    </interactant>
    <interactant intactId="EBI-10265133">
        <id>Q8N365</id>
        <label>CIART</label>
    </interactant>
    <organismsDiffer>false</organismsDiffer>
    <experiments>3</experiments>
</comment>
<comment type="interaction">
    <interactant intactId="EBI-7875264">
        <id>O75553</id>
    </interactant>
    <interactant intactId="EBI-724310">
        <id>Q15038</id>
        <label>DAZAP2</label>
    </interactant>
    <organismsDiffer>false</organismsDiffer>
    <experiments>3</experiments>
</comment>
<comment type="interaction">
    <interactant intactId="EBI-7875264">
        <id>O75553</id>
    </interactant>
    <interactant intactId="EBI-7957930">
        <id>Q92567</id>
        <label>FAM168A</label>
    </interactant>
    <organismsDiffer>false</organismsDiffer>
    <experiments>3</experiments>
</comment>
<comment type="interaction">
    <interactant intactId="EBI-7875264">
        <id>O75553</id>
    </interactant>
    <interactant intactId="EBI-2549423">
        <id>Q6NT76</id>
        <label>HMBOX1</label>
    </interactant>
    <organismsDiffer>false</organismsDiffer>
    <experiments>3</experiments>
</comment>
<comment type="interaction">
    <interactant intactId="EBI-7875264">
        <id>O75553</id>
    </interactant>
    <interactant intactId="EBI-535849">
        <id>Q8WVV9</id>
        <label>HNRNPLL</label>
    </interactant>
    <organismsDiffer>false</organismsDiffer>
    <experiments>3</experiments>
</comment>
<comment type="interaction">
    <interactant intactId="EBI-7875264">
        <id>O75553</id>
    </interactant>
    <interactant intactId="EBI-3913399">
        <id>O43820</id>
        <label>HYAL3</label>
    </interactant>
    <organismsDiffer>false</organismsDiffer>
    <experiments>3</experiments>
</comment>
<comment type="interaction">
    <interactant intactId="EBI-7875264">
        <id>O75553</id>
    </interactant>
    <interactant intactId="EBI-1048945">
        <id>Q3LI72</id>
        <label>KRTAP19-5</label>
    </interactant>
    <organismsDiffer>false</organismsDiffer>
    <experiments>3</experiments>
</comment>
<comment type="interaction">
    <interactant intactId="EBI-7875264">
        <id>O75553</id>
    </interactant>
    <interactant intactId="EBI-10241353">
        <id>Q3SYF9</id>
        <label>KRTAP19-7</label>
    </interactant>
    <organismsDiffer>false</organismsDiffer>
    <experiments>3</experiments>
</comment>
<comment type="interaction">
    <interactant intactId="EBI-7875264">
        <id>O75553</id>
    </interactant>
    <interactant intactId="EBI-10261141">
        <id>Q8IUC2</id>
        <label>KRTAP8-1</label>
    </interactant>
    <organismsDiffer>false</organismsDiffer>
    <experiments>3</experiments>
</comment>
<comment type="interaction">
    <interactant intactId="EBI-7875264">
        <id>O75553</id>
    </interactant>
    <interactant intactId="EBI-10240775">
        <id>Q3B8N2</id>
        <label>LGALS9B</label>
    </interactant>
    <organismsDiffer>false</organismsDiffer>
    <experiments>3</experiments>
</comment>
<comment type="interaction">
    <interactant intactId="EBI-7875264">
        <id>O75553</id>
    </interactant>
    <interactant intactId="EBI-9088829">
        <id>Q6DKI2</id>
        <label>LGALS9C</label>
    </interactant>
    <organismsDiffer>false</organismsDiffer>
    <experiments>3</experiments>
</comment>
<comment type="interaction">
    <interactant intactId="EBI-7875264">
        <id>O75553</id>
    </interactant>
    <interactant intactId="EBI-739832">
        <id>Q8TBB1</id>
        <label>LNX1</label>
    </interactant>
    <organismsDiffer>false</organismsDiffer>
    <experiments>5</experiments>
</comment>
<comment type="interaction">
    <interactant intactId="EBI-7875264">
        <id>O75553</id>
    </interactant>
    <interactant intactId="EBI-716006">
        <id>Q9Y5V3</id>
        <label>MAGED1</label>
    </interactant>
    <organismsDiffer>false</organismsDiffer>
    <experiments>3</experiments>
</comment>
<comment type="interaction">
    <interactant intactId="EBI-7875264">
        <id>O75553</id>
    </interactant>
    <interactant intactId="EBI-10225084">
        <id>Q86VM6</id>
        <label>MBNL1</label>
    </interactant>
    <organismsDiffer>false</organismsDiffer>
    <experiments>3</experiments>
</comment>
<comment type="interaction">
    <interactant intactId="EBI-7875264">
        <id>O75553</id>
    </interactant>
    <interactant intactId="EBI-2805004">
        <id>Q9NR56</id>
        <label>MBNL1</label>
    </interactant>
    <organismsDiffer>false</organismsDiffer>
    <experiments>4</experiments>
</comment>
<comment type="interaction">
    <interactant intactId="EBI-7875264">
        <id>O75553</id>
    </interactant>
    <interactant intactId="EBI-6661142">
        <id>Q9NUK0</id>
        <label>MBNL3</label>
    </interactant>
    <organismsDiffer>false</organismsDiffer>
    <experiments>3</experiments>
</comment>
<comment type="interaction">
    <interactant intactId="EBI-7875264">
        <id>O75553</id>
    </interactant>
    <interactant intactId="EBI-2515597">
        <id>Q96HR8</id>
        <label>NAF1</label>
    </interactant>
    <organismsDiffer>false</organismsDiffer>
    <experiments>3</experiments>
</comment>
<comment type="interaction">
    <interactant intactId="EBI-7875264">
        <id>O75553</id>
    </interactant>
    <interactant intactId="EBI-741158">
        <id>Q96HA8</id>
        <label>NTAQ1</label>
    </interactant>
    <organismsDiffer>false</organismsDiffer>
    <experiments>3</experiments>
</comment>
<comment type="interaction">
    <interactant intactId="EBI-7875264">
        <id>O75553</id>
    </interactant>
    <interactant intactId="EBI-714158">
        <id>Q13526</id>
        <label>PIN1</label>
    </interactant>
    <organismsDiffer>false</organismsDiffer>
    <experiments>3</experiments>
</comment>
<comment type="interaction">
    <interactant intactId="EBI-7875264">
        <id>O75553</id>
    </interactant>
    <interactant intactId="EBI-1389308">
        <id>Q7Z3K3</id>
        <label>POGZ</label>
    </interactant>
    <organismsDiffer>false</organismsDiffer>
    <experiments>3</experiments>
</comment>
<comment type="interaction">
    <interactant intactId="EBI-7875264">
        <id>O75553</id>
    </interactant>
    <interactant intactId="EBI-396072">
        <id>Q13427</id>
        <label>PPIG</label>
    </interactant>
    <organismsDiffer>false</organismsDiffer>
    <experiments>3</experiments>
</comment>
<comment type="interaction">
    <interactant intactId="EBI-7875264">
        <id>O75553</id>
    </interactant>
    <interactant intactId="EBI-10172814">
        <id>P86479</id>
        <label>PRR20C</label>
    </interactant>
    <organismsDiffer>false</organismsDiffer>
    <experiments>3</experiments>
</comment>
<comment type="interaction">
    <interactant intactId="EBI-7875264">
        <id>O75553</id>
    </interactant>
    <interactant intactId="EBI-744023">
        <id>Q9BTL3</id>
        <label>RAMAC</label>
    </interactant>
    <organismsDiffer>false</organismsDiffer>
    <experiments>3</experiments>
</comment>
<comment type="interaction">
    <interactant intactId="EBI-7875264">
        <id>O75553</id>
    </interactant>
    <interactant intactId="EBI-746056">
        <id>O43251</id>
        <label>RBFOX2</label>
    </interactant>
    <organismsDiffer>false</organismsDiffer>
    <experiments>3</experiments>
</comment>
<comment type="interaction">
    <interactant intactId="EBI-7875264">
        <id>O75553</id>
    </interactant>
    <interactant intactId="EBI-372094">
        <id>Q9BQY4</id>
        <label>RHOXF2</label>
    </interactant>
    <organismsDiffer>false</organismsDiffer>
    <experiments>3</experiments>
</comment>
<comment type="interaction">
    <interactant intactId="EBI-7875264">
        <id>O75553</id>
    </interactant>
    <interactant intactId="EBI-10172778">
        <id>A1L4F5</id>
        <label>ROR2</label>
    </interactant>
    <organismsDiffer>false</organismsDiffer>
    <experiments>3</experiments>
</comment>
<comment type="interaction">
    <interactant intactId="EBI-7875264">
        <id>O75553</id>
    </interactant>
    <interactant intactId="EBI-10179231">
        <id>O00241-2</id>
        <label>SIRPB1</label>
    </interactant>
    <organismsDiffer>false</organismsDiffer>
    <experiments>3</experiments>
</comment>
<comment type="interaction">
    <interactant intactId="EBI-7875264">
        <id>O75553</id>
    </interactant>
    <interactant intactId="EBI-2822515">
        <id>Q8WU79</id>
        <label>SMAP2</label>
    </interactant>
    <organismsDiffer>false</organismsDiffer>
    <experiments>3</experiments>
</comment>
<comment type="interaction">
    <interactant intactId="EBI-7875264">
        <id>O75553</id>
    </interactant>
    <interactant intactId="EBI-372475">
        <id>P14678-2</id>
        <label>SNRPB</label>
    </interactant>
    <organismsDiffer>false</organismsDiffer>
    <experiments>3</experiments>
</comment>
<comment type="interaction">
    <interactant intactId="EBI-7875264">
        <id>O75553</id>
    </interactant>
    <interactant intactId="EBI-740355">
        <id>Q96SI9</id>
        <label>STRBP</label>
    </interactant>
    <organismsDiffer>false</organismsDiffer>
    <experiments>3</experiments>
</comment>
<comment type="interaction">
    <interactant intactId="EBI-7875264">
        <id>O75553</id>
    </interactant>
    <interactant intactId="EBI-710310">
        <id>Q15560</id>
        <label>TCEA2</label>
    </interactant>
    <organismsDiffer>false</organismsDiffer>
    <experiments>3</experiments>
</comment>
<comment type="interaction">
    <interactant intactId="EBI-7875264">
        <id>O75553</id>
    </interactant>
    <interactant intactId="EBI-10259904">
        <id>Q86VL0</id>
        <label>TCEA2</label>
    </interactant>
    <organismsDiffer>false</organismsDiffer>
    <experiments>3</experiments>
</comment>
<comment type="interaction">
    <interactant intactId="EBI-7875264">
        <id>O75553</id>
    </interactant>
    <interactant intactId="EBI-954696">
        <id>Q8N8B7</id>
        <label>TCEANC</label>
    </interactant>
    <organismsDiffer>false</organismsDiffer>
    <experiments>3</experiments>
</comment>
<comment type="interaction">
    <interactant intactId="EBI-7875264">
        <id>O75553</id>
    </interactant>
    <interactant intactId="EBI-10188441">
        <id>Q6ZXV5</id>
        <label>TMTC3</label>
    </interactant>
    <organismsDiffer>false</organismsDiffer>
    <experiments>3</experiments>
</comment>
<comment type="interaction">
    <interactant intactId="EBI-7875264">
        <id>O75553</id>
    </interactant>
    <interactant intactId="EBI-10249783">
        <id>Q6FIE9</id>
        <label>TOLLIP</label>
    </interactant>
    <organismsDiffer>false</organismsDiffer>
    <experiments>3</experiments>
</comment>
<comment type="interaction">
    <interactant intactId="EBI-7875264">
        <id>O75553</id>
    </interactant>
    <interactant intactId="EBI-74615">
        <id>Q9H0E2</id>
        <label>TOLLIP</label>
    </interactant>
    <organismsDiffer>false</organismsDiffer>
    <experiments>3</experiments>
</comment>
<comment type="interaction">
    <interactant intactId="EBI-7875264">
        <id>O75553</id>
    </interactant>
    <interactant intactId="EBI-10191303">
        <id>O95231</id>
        <label>VENTX</label>
    </interactant>
    <organismsDiffer>false</organismsDiffer>
    <experiments>4</experiments>
</comment>
<comment type="interaction">
    <interactant intactId="EBI-7875264">
        <id>O75553</id>
    </interactant>
    <interactant intactId="EBI-10188476">
        <id>A0A0C4DGF1</id>
        <label>ZBTB32</label>
    </interactant>
    <organismsDiffer>false</organismsDiffer>
    <experiments>3</experiments>
</comment>
<comment type="interaction">
    <interactant intactId="EBI-7875264">
        <id>O75553</id>
    </interactant>
    <interactant intactId="EBI-742550">
        <id>Q96K80</id>
        <label>ZC3H10</label>
    </interactant>
    <organismsDiffer>false</organismsDiffer>
    <experiments>3</experiments>
</comment>
<comment type="interaction">
    <interactant intactId="EBI-7875264">
        <id>O75553</id>
    </interactant>
    <interactant intactId="EBI-597063">
        <id>Q8TBK6</id>
        <label>ZCCHC10</label>
    </interactant>
    <organismsDiffer>false</organismsDiffer>
    <experiments>3</experiments>
</comment>
<comment type="interaction">
    <interactant intactId="EBI-7875264">
        <id>O75553</id>
    </interactant>
    <interactant intactId="EBI-948288">
        <id>Q96MN9</id>
        <label>ZNF488</label>
    </interactant>
    <organismsDiffer>false</organismsDiffer>
    <experiments>3</experiments>
</comment>
<comment type="interaction">
    <interactant intactId="EBI-7875264">
        <id>O75553</id>
    </interactant>
    <interactant intactId="EBI-10309771">
        <id>Q9H9I0</id>
    </interactant>
    <organismsDiffer>false</organismsDiffer>
    <experiments>3</experiments>
</comment>
<comment type="interaction">
    <interactant intactId="EBI-21246842">
        <id>O75553-4</id>
    </interactant>
    <interactant intactId="EBI-77613">
        <id>P05067</id>
        <label>APP</label>
    </interactant>
    <organismsDiffer>false</organismsDiffer>
    <experiments>3</experiments>
</comment>
<comment type="interaction">
    <interactant intactId="EBI-12133006">
        <id>O75553-5</id>
    </interactant>
    <interactant intactId="EBI-714158">
        <id>Q13526</id>
        <label>PIN1</label>
    </interactant>
    <organismsDiffer>false</organismsDiffer>
    <experiments>3</experiments>
</comment>
<comment type="interaction">
    <interactant intactId="EBI-12133006">
        <id>O75553-5</id>
    </interactant>
    <interactant intactId="EBI-458391">
        <id>P04271</id>
        <label>S100B</label>
    </interactant>
    <organismsDiffer>false</organismsDiffer>
    <experiments>3</experiments>
</comment>
<comment type="subcellular location">
    <subcellularLocation>
        <location evidence="1">Cytoplasm</location>
    </subcellularLocation>
</comment>
<comment type="alternative products">
    <event type="alternative splicing"/>
    <isoform>
        <id>O75553-1</id>
        <name>DAB588</name>
        <sequence type="displayed"/>
    </isoform>
    <isoform>
        <id>O75553-2</id>
        <name>DAB213</name>
        <sequence type="described" ref="VSP_026168 VSP_026169"/>
    </isoform>
    <isoform>
        <id>O75553-3</id>
        <name>DAB469</name>
        <sequence type="described" ref="VSP_026166"/>
    </isoform>
    <isoform>
        <id>O75553-4</id>
        <name>DAB537</name>
        <sequence type="described" ref="VSP_026167 VSP_026171"/>
    </isoform>
    <isoform>
        <id>O75553-5</id>
        <name>DAB553</name>
        <sequence type="described" ref="VSP_026167"/>
    </isoform>
    <isoform>
        <id>O75553-6</id>
        <name>DAB555</name>
        <sequence type="described" ref="VSP_026170"/>
    </isoform>
</comment>
<comment type="tissue specificity">
    <text evidence="6">Mainly expressed in brain.</text>
</comment>
<comment type="domain">
    <text evidence="1">The PID domain specifically binds to the Asn-Pro-Xaa-Tyr(P) motif found in many tyrosine-phosphorylated proteins.</text>
</comment>
<comment type="PTM">
    <text evidence="1">Phosphorylated by FYN on Tyr-198 and Tyr-220 upon reelin induction in embryonic neurons. Also phosphorylated on Ser-524 independently of reelin signaling.</text>
</comment>
<comment type="PTM">
    <text evidence="1 7">Ubiquitinated by various cullin-5-RING E3 ubiquitin-protein ligase complexes (ECS complexes) following ligand-binding and phosphorylation, leading to its degradation. Ubiquitinated by the ECS(SOCS7) complex in the cortical plate of the developing cerebral cortex following ligand-binding and phosphorylation by FYN, leading to its degradation by the proteasome. Recognized by ZSWIM8 through a disorder targets misorder mechanism that eliminates misfolded DAB1 via ubiquitination and proteasomal degradation (PubMed:35989311).</text>
</comment>
<comment type="disease" evidence="6">
    <disease id="DI-05050">
        <name>Spinocerebellar ataxia 37</name>
        <acronym>SCA37</acronym>
        <description>A form of spinocerebellar ataxia, a clinically and genetically heterogeneous group of cerebellar disorders. Patients show progressive incoordination of gait and often poor coordination of hands, speech and eye movements, due to degeneration of the cerebellum with variable involvement of the brainstem and spinal cord. SCA37 is an autosomal dominant form characterized by adult-onset of slowly progressive gait instability, frequent falls, and dysarthria associated with cerebellar atrophy on brain imaging.</description>
        <dbReference type="MIM" id="615945"/>
    </disease>
    <text>The disease is caused by variants affecting the gene represented in this entry.</text>
</comment>
<comment type="sequence caution" evidence="12">
    <conflict type="erroneous initiation">
        <sequence resource="EMBL-CDS" id="BAE06094"/>
    </conflict>
</comment>
<reference key="1">
    <citation type="journal article" date="1998" name="Genomics">
        <title>Cloning of human DAB1 and mapping to chromosome 1p31-p32.</title>
        <authorList>
            <person name="Lambert de Rouvroit C."/>
            <person name="Goffinet A.M."/>
        </authorList>
    </citation>
    <scope>NUCLEOTIDE SEQUENCE [MRNA] (ISOFORM DAB555)</scope>
</reference>
<reference key="2">
    <citation type="submission" date="2000-05" db="EMBL/GenBank/DDBJ databases">
        <title>Aberrant disabled-1 expression in tumors.</title>
        <authorList>
            <person name="Fazili Z."/>
            <person name="Sun W."/>
            <person name="Xu X.-X."/>
        </authorList>
    </citation>
    <scope>NUCLEOTIDE SEQUENCE [MRNA] (ISOFORM DAB555)</scope>
</reference>
<reference key="3">
    <citation type="journal article" date="2006" name="Nature">
        <title>The DNA sequence and biological annotation of human chromosome 1.</title>
        <authorList>
            <person name="Gregory S.G."/>
            <person name="Barlow K.F."/>
            <person name="McLay K.E."/>
            <person name="Kaul R."/>
            <person name="Swarbreck D."/>
            <person name="Dunham A."/>
            <person name="Scott C.E."/>
            <person name="Howe K.L."/>
            <person name="Woodfine K."/>
            <person name="Spencer C.C.A."/>
            <person name="Jones M.C."/>
            <person name="Gillson C."/>
            <person name="Searle S."/>
            <person name="Zhou Y."/>
            <person name="Kokocinski F."/>
            <person name="McDonald L."/>
            <person name="Evans R."/>
            <person name="Phillips K."/>
            <person name="Atkinson A."/>
            <person name="Cooper R."/>
            <person name="Jones C."/>
            <person name="Hall R.E."/>
            <person name="Andrews T.D."/>
            <person name="Lloyd C."/>
            <person name="Ainscough R."/>
            <person name="Almeida J.P."/>
            <person name="Ambrose K.D."/>
            <person name="Anderson F."/>
            <person name="Andrew R.W."/>
            <person name="Ashwell R.I.S."/>
            <person name="Aubin K."/>
            <person name="Babbage A.K."/>
            <person name="Bagguley C.L."/>
            <person name="Bailey J."/>
            <person name="Beasley H."/>
            <person name="Bethel G."/>
            <person name="Bird C.P."/>
            <person name="Bray-Allen S."/>
            <person name="Brown J.Y."/>
            <person name="Brown A.J."/>
            <person name="Buckley D."/>
            <person name="Burton J."/>
            <person name="Bye J."/>
            <person name="Carder C."/>
            <person name="Chapman J.C."/>
            <person name="Clark S.Y."/>
            <person name="Clarke G."/>
            <person name="Clee C."/>
            <person name="Cobley V."/>
            <person name="Collier R.E."/>
            <person name="Corby N."/>
            <person name="Coville G.J."/>
            <person name="Davies J."/>
            <person name="Deadman R."/>
            <person name="Dunn M."/>
            <person name="Earthrowl M."/>
            <person name="Ellington A.G."/>
            <person name="Errington H."/>
            <person name="Frankish A."/>
            <person name="Frankland J."/>
            <person name="French L."/>
            <person name="Garner P."/>
            <person name="Garnett J."/>
            <person name="Gay L."/>
            <person name="Ghori M.R.J."/>
            <person name="Gibson R."/>
            <person name="Gilby L.M."/>
            <person name="Gillett W."/>
            <person name="Glithero R.J."/>
            <person name="Grafham D.V."/>
            <person name="Griffiths C."/>
            <person name="Griffiths-Jones S."/>
            <person name="Grocock R."/>
            <person name="Hammond S."/>
            <person name="Harrison E.S.I."/>
            <person name="Hart E."/>
            <person name="Haugen E."/>
            <person name="Heath P.D."/>
            <person name="Holmes S."/>
            <person name="Holt K."/>
            <person name="Howden P.J."/>
            <person name="Hunt A.R."/>
            <person name="Hunt S.E."/>
            <person name="Hunter G."/>
            <person name="Isherwood J."/>
            <person name="James R."/>
            <person name="Johnson C."/>
            <person name="Johnson D."/>
            <person name="Joy A."/>
            <person name="Kay M."/>
            <person name="Kershaw J.K."/>
            <person name="Kibukawa M."/>
            <person name="Kimberley A.M."/>
            <person name="King A."/>
            <person name="Knights A.J."/>
            <person name="Lad H."/>
            <person name="Laird G."/>
            <person name="Lawlor S."/>
            <person name="Leongamornlert D.A."/>
            <person name="Lloyd D.M."/>
            <person name="Loveland J."/>
            <person name="Lovell J."/>
            <person name="Lush M.J."/>
            <person name="Lyne R."/>
            <person name="Martin S."/>
            <person name="Mashreghi-Mohammadi M."/>
            <person name="Matthews L."/>
            <person name="Matthews N.S.W."/>
            <person name="McLaren S."/>
            <person name="Milne S."/>
            <person name="Mistry S."/>
            <person name="Moore M.J.F."/>
            <person name="Nickerson T."/>
            <person name="O'Dell C.N."/>
            <person name="Oliver K."/>
            <person name="Palmeiri A."/>
            <person name="Palmer S.A."/>
            <person name="Parker A."/>
            <person name="Patel D."/>
            <person name="Pearce A.V."/>
            <person name="Peck A.I."/>
            <person name="Pelan S."/>
            <person name="Phelps K."/>
            <person name="Phillimore B.J."/>
            <person name="Plumb R."/>
            <person name="Rajan J."/>
            <person name="Raymond C."/>
            <person name="Rouse G."/>
            <person name="Saenphimmachak C."/>
            <person name="Sehra H.K."/>
            <person name="Sheridan E."/>
            <person name="Shownkeen R."/>
            <person name="Sims S."/>
            <person name="Skuce C.D."/>
            <person name="Smith M."/>
            <person name="Steward C."/>
            <person name="Subramanian S."/>
            <person name="Sycamore N."/>
            <person name="Tracey A."/>
            <person name="Tromans A."/>
            <person name="Van Helmond Z."/>
            <person name="Wall M."/>
            <person name="Wallis J.M."/>
            <person name="White S."/>
            <person name="Whitehead S.L."/>
            <person name="Wilkinson J.E."/>
            <person name="Willey D.L."/>
            <person name="Williams H."/>
            <person name="Wilming L."/>
            <person name="Wray P.W."/>
            <person name="Wu Z."/>
            <person name="Coulson A."/>
            <person name="Vaudin M."/>
            <person name="Sulston J.E."/>
            <person name="Durbin R.M."/>
            <person name="Hubbard T."/>
            <person name="Wooster R."/>
            <person name="Dunham I."/>
            <person name="Carter N.P."/>
            <person name="McVean G."/>
            <person name="Ross M.T."/>
            <person name="Harrow J."/>
            <person name="Olson M.V."/>
            <person name="Beck S."/>
            <person name="Rogers J."/>
            <person name="Bentley D.R."/>
        </authorList>
    </citation>
    <scope>NUCLEOTIDE SEQUENCE [LARGE SCALE GENOMIC DNA]</scope>
    <scope>ALTERNATIVE SPLICING</scope>
</reference>
<reference key="4">
    <citation type="submission" date="2005-09" db="EMBL/GenBank/DDBJ databases">
        <authorList>
            <person name="Mural R.J."/>
            <person name="Istrail S."/>
            <person name="Sutton G.G."/>
            <person name="Florea L."/>
            <person name="Halpern A.L."/>
            <person name="Mobarry C.M."/>
            <person name="Lippert R."/>
            <person name="Walenz B."/>
            <person name="Shatkay H."/>
            <person name="Dew I."/>
            <person name="Miller J.R."/>
            <person name="Flanigan M.J."/>
            <person name="Edwards N.J."/>
            <person name="Bolanos R."/>
            <person name="Fasulo D."/>
            <person name="Halldorsson B.V."/>
            <person name="Hannenhalli S."/>
            <person name="Turner R."/>
            <person name="Yooseph S."/>
            <person name="Lu F."/>
            <person name="Nusskern D.R."/>
            <person name="Shue B.C."/>
            <person name="Zheng X.H."/>
            <person name="Zhong F."/>
            <person name="Delcher A.L."/>
            <person name="Huson D.H."/>
            <person name="Kravitz S.A."/>
            <person name="Mouchard L."/>
            <person name="Reinert K."/>
            <person name="Remington K.A."/>
            <person name="Clark A.G."/>
            <person name="Waterman M.S."/>
            <person name="Eichler E.E."/>
            <person name="Adams M.D."/>
            <person name="Hunkapiller M.W."/>
            <person name="Myers E.W."/>
            <person name="Venter J.C."/>
        </authorList>
    </citation>
    <scope>NUCLEOTIDE SEQUENCE [LARGE SCALE GENOMIC DNA]</scope>
</reference>
<reference key="5">
    <citation type="journal article" date="2004" name="Nat. Genet.">
        <title>Complete sequencing and characterization of 21,243 full-length human cDNAs.</title>
        <authorList>
            <person name="Ota T."/>
            <person name="Suzuki Y."/>
            <person name="Nishikawa T."/>
            <person name="Otsuki T."/>
            <person name="Sugiyama T."/>
            <person name="Irie R."/>
            <person name="Wakamatsu A."/>
            <person name="Hayashi K."/>
            <person name="Sato H."/>
            <person name="Nagai K."/>
            <person name="Kimura K."/>
            <person name="Makita H."/>
            <person name="Sekine M."/>
            <person name="Obayashi M."/>
            <person name="Nishi T."/>
            <person name="Shibahara T."/>
            <person name="Tanaka T."/>
            <person name="Ishii S."/>
            <person name="Yamamoto J."/>
            <person name="Saito K."/>
            <person name="Kawai Y."/>
            <person name="Isono Y."/>
            <person name="Nakamura Y."/>
            <person name="Nagahari K."/>
            <person name="Murakami K."/>
            <person name="Yasuda T."/>
            <person name="Iwayanagi T."/>
            <person name="Wagatsuma M."/>
            <person name="Shiratori A."/>
            <person name="Sudo H."/>
            <person name="Hosoiri T."/>
            <person name="Kaku Y."/>
            <person name="Kodaira H."/>
            <person name="Kondo H."/>
            <person name="Sugawara M."/>
            <person name="Takahashi M."/>
            <person name="Kanda K."/>
            <person name="Yokoi T."/>
            <person name="Furuya T."/>
            <person name="Kikkawa E."/>
            <person name="Omura Y."/>
            <person name="Abe K."/>
            <person name="Kamihara K."/>
            <person name="Katsuta N."/>
            <person name="Sato K."/>
            <person name="Tanikawa M."/>
            <person name="Yamazaki M."/>
            <person name="Ninomiya K."/>
            <person name="Ishibashi T."/>
            <person name="Yamashita H."/>
            <person name="Murakawa K."/>
            <person name="Fujimori K."/>
            <person name="Tanai H."/>
            <person name="Kimata M."/>
            <person name="Watanabe M."/>
            <person name="Hiraoka S."/>
            <person name="Chiba Y."/>
            <person name="Ishida S."/>
            <person name="Ono Y."/>
            <person name="Takiguchi S."/>
            <person name="Watanabe S."/>
            <person name="Yosida M."/>
            <person name="Hotuta T."/>
            <person name="Kusano J."/>
            <person name="Kanehori K."/>
            <person name="Takahashi-Fujii A."/>
            <person name="Hara H."/>
            <person name="Tanase T.-O."/>
            <person name="Nomura Y."/>
            <person name="Togiya S."/>
            <person name="Komai F."/>
            <person name="Hara R."/>
            <person name="Takeuchi K."/>
            <person name="Arita M."/>
            <person name="Imose N."/>
            <person name="Musashino K."/>
            <person name="Yuuki H."/>
            <person name="Oshima A."/>
            <person name="Sasaki N."/>
            <person name="Aotsuka S."/>
            <person name="Yoshikawa Y."/>
            <person name="Matsunawa H."/>
            <person name="Ichihara T."/>
            <person name="Shiohata N."/>
            <person name="Sano S."/>
            <person name="Moriya S."/>
            <person name="Momiyama H."/>
            <person name="Satoh N."/>
            <person name="Takami S."/>
            <person name="Terashima Y."/>
            <person name="Suzuki O."/>
            <person name="Nakagawa S."/>
            <person name="Senoh A."/>
            <person name="Mizoguchi H."/>
            <person name="Goto Y."/>
            <person name="Shimizu F."/>
            <person name="Wakebe H."/>
            <person name="Hishigaki H."/>
            <person name="Watanabe T."/>
            <person name="Sugiyama A."/>
            <person name="Takemoto M."/>
            <person name="Kawakami B."/>
            <person name="Yamazaki M."/>
            <person name="Watanabe K."/>
            <person name="Kumagai A."/>
            <person name="Itakura S."/>
            <person name="Fukuzumi Y."/>
            <person name="Fujimori Y."/>
            <person name="Komiyama M."/>
            <person name="Tashiro H."/>
            <person name="Tanigami A."/>
            <person name="Fujiwara T."/>
            <person name="Ono T."/>
            <person name="Yamada K."/>
            <person name="Fujii Y."/>
            <person name="Ozaki K."/>
            <person name="Hirao M."/>
            <person name="Ohmori Y."/>
            <person name="Kawabata A."/>
            <person name="Hikiji T."/>
            <person name="Kobatake N."/>
            <person name="Inagaki H."/>
            <person name="Ikema Y."/>
            <person name="Okamoto S."/>
            <person name="Okitani R."/>
            <person name="Kawakami T."/>
            <person name="Noguchi S."/>
            <person name="Itoh T."/>
            <person name="Shigeta K."/>
            <person name="Senba T."/>
            <person name="Matsumura K."/>
            <person name="Nakajima Y."/>
            <person name="Mizuno T."/>
            <person name="Morinaga M."/>
            <person name="Sasaki M."/>
            <person name="Togashi T."/>
            <person name="Oyama M."/>
            <person name="Hata H."/>
            <person name="Watanabe M."/>
            <person name="Komatsu T."/>
            <person name="Mizushima-Sugano J."/>
            <person name="Satoh T."/>
            <person name="Shirai Y."/>
            <person name="Takahashi Y."/>
            <person name="Nakagawa K."/>
            <person name="Okumura K."/>
            <person name="Nagase T."/>
            <person name="Nomura N."/>
            <person name="Kikuchi H."/>
            <person name="Masuho Y."/>
            <person name="Yamashita R."/>
            <person name="Nakai K."/>
            <person name="Yada T."/>
            <person name="Nakamura Y."/>
            <person name="Ohara O."/>
            <person name="Isogai T."/>
            <person name="Sugano S."/>
        </authorList>
    </citation>
    <scope>NUCLEOTIDE SEQUENCE [LARGE SCALE MRNA] (ISOFORM DAB555)</scope>
    <source>
        <tissue>Brain</tissue>
    </source>
</reference>
<reference key="6">
    <citation type="journal article" date="2004" name="Genome Res.">
        <title>The status, quality, and expansion of the NIH full-length cDNA project: the Mammalian Gene Collection (MGC).</title>
        <authorList>
            <consortium name="The MGC Project Team"/>
        </authorList>
    </citation>
    <scope>NUCLEOTIDE SEQUENCE [LARGE SCALE MRNA] (ISOFORMS DAB469; DAB537 AND DAB553)</scope>
</reference>
<reference key="7">
    <citation type="journal article" date="2004" name="J. Biol. Chem.">
        <title>Serine and threonine phosphorylation of the low density lipoprotein receptor-related protein by protein kinase Calpha regulates endocytosis and association with adaptor molecules.</title>
        <authorList>
            <person name="Ranganathan S."/>
            <person name="Liu C.-X."/>
            <person name="Migliorini M.M."/>
            <person name="Von Arnim C.A.F."/>
            <person name="Peltan I.D."/>
            <person name="Mikhailenko I."/>
            <person name="Hyman B.T."/>
            <person name="Strickland D.K."/>
        </authorList>
    </citation>
    <scope>INTERACTION WITH LRP1</scope>
</reference>
<reference key="8">
    <citation type="journal article" date="2017" name="Am. J. Hum. Genet.">
        <title>A pentanucleotide ATTTC repeat insertion in the non-coding region of DAB1, mapping to SCA37, causes spinocerebellar ataxia.</title>
        <authorList>
            <person name="Seixas A.I."/>
            <person name="Loureiro J.R."/>
            <person name="Costa C."/>
            <person name="Ordonez-Ugalde A."/>
            <person name="Marcelino H."/>
            <person name="Oliveira C.L."/>
            <person name="Loureiro J.L."/>
            <person name="Dhingra A."/>
            <person name="Brandao E."/>
            <person name="Cruz V.T."/>
            <person name="Timoteo A."/>
            <person name="Quintans B."/>
            <person name="Rouleau G.A."/>
            <person name="Rizzu P."/>
            <person name="Carracedo A."/>
            <person name="Bessa J."/>
            <person name="Heutink P."/>
            <person name="Sequeiros J."/>
            <person name="Sobrido M.J."/>
            <person name="Coutinho P."/>
            <person name="Silveira I."/>
        </authorList>
    </citation>
    <scope>INVOLVEMENT IN SCA37</scope>
    <scope>TISSUE SPECIFICITY</scope>
</reference>
<reference key="9">
    <citation type="journal article" date="2023" name="Cereb. Cortex">
        <title>The ZSWIM8 ubiquitin ligase regulates neurodevelopment by guarding the protein quality of intrinsically disordered Dab1.</title>
        <authorList>
            <person name="Wang G."/>
            <person name="Lei J."/>
            <person name="Wang Y."/>
            <person name="Yu J."/>
            <person name="He Y."/>
            <person name="Zhao W."/>
            <person name="Hu Z."/>
            <person name="Xu Z."/>
            <person name="Jin Y."/>
            <person name="Gu Y."/>
            <person name="Guo X."/>
            <person name="Yang B."/>
            <person name="Gao Z."/>
            <person name="Wang Z."/>
        </authorList>
    </citation>
    <scope>INTERACTION WITH ZSWIM8</scope>
    <scope>UBIQUITINATION</scope>
</reference>
<feature type="chain" id="PRO_0000079767" description="Disabled homolog 1">
    <location>
        <begin position="1"/>
        <end position="588"/>
    </location>
</feature>
<feature type="domain" description="PID" evidence="3">
    <location>
        <begin position="36"/>
        <end position="189"/>
    </location>
</feature>
<feature type="region of interest" description="Disordered" evidence="4">
    <location>
        <begin position="1"/>
        <end position="26"/>
    </location>
</feature>
<feature type="region of interest" description="Disordered" evidence="4">
    <location>
        <begin position="417"/>
        <end position="443"/>
    </location>
</feature>
<feature type="region of interest" description="Disordered" evidence="4">
    <location>
        <begin position="451"/>
        <end position="470"/>
    </location>
</feature>
<feature type="region of interest" description="Disordered" evidence="4">
    <location>
        <begin position="502"/>
        <end position="588"/>
    </location>
</feature>
<feature type="compositionally biased region" description="Basic and acidic residues" evidence="4">
    <location>
        <begin position="15"/>
        <end position="26"/>
    </location>
</feature>
<feature type="compositionally biased region" description="Polar residues" evidence="4">
    <location>
        <begin position="424"/>
        <end position="436"/>
    </location>
</feature>
<feature type="compositionally biased region" description="Low complexity" evidence="4">
    <location>
        <begin position="503"/>
        <end position="512"/>
    </location>
</feature>
<feature type="compositionally biased region" description="Low complexity" evidence="4">
    <location>
        <begin position="520"/>
        <end position="534"/>
    </location>
</feature>
<feature type="compositionally biased region" description="Acidic residues" evidence="4">
    <location>
        <begin position="537"/>
        <end position="546"/>
    </location>
</feature>
<feature type="modified residue" description="Phosphotyrosine" evidence="1">
    <location>
        <position position="198"/>
    </location>
</feature>
<feature type="modified residue" description="Phosphotyrosine" evidence="1">
    <location>
        <position position="220"/>
    </location>
</feature>
<feature type="modified residue" description="Phosphotyrosine" evidence="1">
    <location>
        <position position="232"/>
    </location>
</feature>
<feature type="modified residue" description="Phosphoserine; by CDK5" evidence="1">
    <location>
        <position position="524"/>
    </location>
</feature>
<feature type="splice variant" id="VSP_026166" description="In isoform DAB469." evidence="9">
    <location>
        <begin position="103"/>
        <end position="221"/>
    </location>
</feature>
<feature type="splice variant" id="VSP_026167" description="In isoform DAB553 and isoform DAB537." evidence="9">
    <location>
        <begin position="185"/>
        <end position="219"/>
    </location>
</feature>
<feature type="splice variant" id="VSP_026168" description="In isoform DAB213." evidence="12">
    <original>YIVFEAGHEPIRDP</original>
    <variation>VISETSRGFRFKSD</variation>
    <location>
        <begin position="200"/>
        <end position="213"/>
    </location>
</feature>
<feature type="splice variant" id="VSP_026169" description="In isoform DAB213." evidence="12">
    <location>
        <begin position="214"/>
        <end position="588"/>
    </location>
</feature>
<feature type="splice variant" id="VSP_026170" description="In isoform DAB555." evidence="8 10 11">
    <location>
        <begin position="242"/>
        <end position="274"/>
    </location>
</feature>
<feature type="splice variant" id="VSP_026171" description="In isoform DAB537." evidence="9">
    <location>
        <begin position="259"/>
        <end position="274"/>
    </location>
</feature>
<feature type="sequence variant" id="VAR_056857" description="In dbSNP:rs1855377.">
    <original>V</original>
    <variation>I</variation>
    <location>
        <position position="71"/>
    </location>
</feature>
<feature type="sequence conflict" description="In Ref. 6; AAI12939." evidence="12" ref="6">
    <original>A</original>
    <variation>T</variation>
    <location>
        <position position="15"/>
    </location>
</feature>
<feature type="sequence conflict" description="In Ref. 6; AAH67447." evidence="12" ref="6">
    <original>K</original>
    <variation>M</variation>
    <location>
        <position position="59"/>
    </location>
</feature>
<feature type="sequence conflict" description="In Ref. 2; AAF73058." evidence="12" ref="2">
    <original>F</original>
    <variation>L</variation>
    <location>
        <position position="86"/>
    </location>
</feature>
<feature type="sequence conflict" description="In Ref. 6; AAH67447." evidence="12" ref="6">
    <original>P</original>
    <variation>S</variation>
    <location>
        <position position="295"/>
    </location>
</feature>
<feature type="sequence conflict" description="In Ref. 1; AAC70068." evidence="12" ref="1">
    <original>F</original>
    <variation>L</variation>
    <location>
        <position position="324"/>
    </location>
</feature>
<feature type="sequence conflict" description="In Ref. 1; AAC70068." evidence="12" ref="1">
    <original>S</original>
    <variation>P</variation>
    <location>
        <position position="331"/>
    </location>
</feature>
<feature type="sequence conflict" description="In Ref. 1; AAC70068." evidence="12" ref="1">
    <original>Q</original>
    <variation>H</variation>
    <location>
        <position position="359"/>
    </location>
</feature>
<feature type="sequence conflict" description="In Ref. 2; AAF73058." evidence="12" ref="2">
    <original>G</original>
    <variation>R</variation>
    <location>
        <position position="368"/>
    </location>
</feature>
<feature type="sequence conflict" description="In Ref. 2; AAF73058." evidence="12" ref="2">
    <original>M</original>
    <variation>V</variation>
    <location>
        <position position="412"/>
    </location>
</feature>
<feature type="sequence conflict" description="In Ref. 1; AAC70068." evidence="12" ref="1">
    <original>A</original>
    <variation>D</variation>
    <location>
        <position position="586"/>
    </location>
</feature>
<accession>O75553</accession>
<accession>A4FU90</accession>
<accession>B3KTG3</accession>
<accession>Q4LE59</accession>
<accession>Q5T6M6</accession>
<accession>Q5T6M9</accession>
<accession>Q5T835</accession>
<accession>Q5T836</accession>
<accession>Q5T837</accession>
<accession>Q6NWS9</accession>
<accession>Q6NWT0</accession>
<accession>Q6NWT1</accession>
<accession>Q9NYA8</accession>
<keyword id="KW-0025">Alternative splicing</keyword>
<keyword id="KW-0963">Cytoplasm</keyword>
<keyword id="KW-0217">Developmental protein</keyword>
<keyword id="KW-0221">Differentiation</keyword>
<keyword id="KW-0523">Neurodegeneration</keyword>
<keyword id="KW-0524">Neurogenesis</keyword>
<keyword id="KW-0597">Phosphoprotein</keyword>
<keyword id="KW-1267">Proteomics identification</keyword>
<keyword id="KW-1185">Reference proteome</keyword>
<keyword id="KW-0950">Spinocerebellar ataxia</keyword>
<keyword id="KW-0832">Ubl conjugation</keyword>
<gene>
    <name type="primary">DAB1</name>
</gene>
<name>DAB1_HUMAN</name>